<protein>
    <recommendedName>
        <fullName evidence="1">Putative membrane protein insertion efficiency factor</fullName>
    </recommendedName>
</protein>
<sequence length="85" mass="9616">MATPLSPFSWLAIGIVKLYQWFISPLIGPRCRFTPTCSTYAIEALRAHGFIKGCWLSTKRLLKCHPLNEGGFDPVPPVQKQDRDK</sequence>
<gene>
    <name type="ordered locus">VC_0005</name>
</gene>
<proteinExistence type="inferred from homology"/>
<name>YIDD_VIBCH</name>
<accession>Q9KVY3</accession>
<organism>
    <name type="scientific">Vibrio cholerae serotype O1 (strain ATCC 39315 / El Tor Inaba N16961)</name>
    <dbReference type="NCBI Taxonomy" id="243277"/>
    <lineage>
        <taxon>Bacteria</taxon>
        <taxon>Pseudomonadati</taxon>
        <taxon>Pseudomonadota</taxon>
        <taxon>Gammaproteobacteria</taxon>
        <taxon>Vibrionales</taxon>
        <taxon>Vibrionaceae</taxon>
        <taxon>Vibrio</taxon>
    </lineage>
</organism>
<feature type="chain" id="PRO_0000171895" description="Putative membrane protein insertion efficiency factor">
    <location>
        <begin position="1"/>
        <end position="85"/>
    </location>
</feature>
<dbReference type="EMBL" id="AE003852">
    <property type="protein sequence ID" value="AAF93183.1"/>
    <property type="molecule type" value="Genomic_DNA"/>
</dbReference>
<dbReference type="PIR" id="F82375">
    <property type="entry name" value="F82375"/>
</dbReference>
<dbReference type="RefSeq" id="NP_062589.1">
    <property type="nucleotide sequence ID" value="NC_002505.1"/>
</dbReference>
<dbReference type="STRING" id="243277.VC_0005"/>
<dbReference type="DNASU" id="2612958"/>
<dbReference type="EnsemblBacteria" id="AAF93183">
    <property type="protein sequence ID" value="AAF93183"/>
    <property type="gene ID" value="VC_0005"/>
</dbReference>
<dbReference type="KEGG" id="vch:VC_0005"/>
<dbReference type="PATRIC" id="fig|243277.26.peg.4"/>
<dbReference type="eggNOG" id="COG0759">
    <property type="taxonomic scope" value="Bacteria"/>
</dbReference>
<dbReference type="HOGENOM" id="CLU_144811_5_2_6"/>
<dbReference type="Proteomes" id="UP000000584">
    <property type="component" value="Chromosome 1"/>
</dbReference>
<dbReference type="GO" id="GO:0005886">
    <property type="term" value="C:plasma membrane"/>
    <property type="evidence" value="ECO:0007669"/>
    <property type="project" value="UniProtKB-SubCell"/>
</dbReference>
<dbReference type="HAMAP" id="MF_00386">
    <property type="entry name" value="UPF0161_YidD"/>
    <property type="match status" value="1"/>
</dbReference>
<dbReference type="InterPro" id="IPR002696">
    <property type="entry name" value="Membr_insert_effic_factor_YidD"/>
</dbReference>
<dbReference type="NCBIfam" id="TIGR00278">
    <property type="entry name" value="membrane protein insertion efficiency factor YidD"/>
    <property type="match status" value="1"/>
</dbReference>
<dbReference type="PANTHER" id="PTHR33383">
    <property type="entry name" value="MEMBRANE PROTEIN INSERTION EFFICIENCY FACTOR-RELATED"/>
    <property type="match status" value="1"/>
</dbReference>
<dbReference type="PANTHER" id="PTHR33383:SF1">
    <property type="entry name" value="MEMBRANE PROTEIN INSERTION EFFICIENCY FACTOR-RELATED"/>
    <property type="match status" value="1"/>
</dbReference>
<dbReference type="Pfam" id="PF01809">
    <property type="entry name" value="YidD"/>
    <property type="match status" value="1"/>
</dbReference>
<dbReference type="SMART" id="SM01234">
    <property type="entry name" value="Haemolytic"/>
    <property type="match status" value="1"/>
</dbReference>
<keyword id="KW-0997">Cell inner membrane</keyword>
<keyword id="KW-1003">Cell membrane</keyword>
<keyword id="KW-0472">Membrane</keyword>
<keyword id="KW-1185">Reference proteome</keyword>
<comment type="function">
    <text evidence="1">Could be involved in insertion of integral membrane proteins into the membrane.</text>
</comment>
<comment type="subcellular location">
    <subcellularLocation>
        <location evidence="1">Cell inner membrane</location>
        <topology evidence="1">Peripheral membrane protein</topology>
        <orientation evidence="1">Cytoplasmic side</orientation>
    </subcellularLocation>
</comment>
<comment type="similarity">
    <text evidence="1">Belongs to the UPF0161 family.</text>
</comment>
<evidence type="ECO:0000255" key="1">
    <source>
        <dbReference type="HAMAP-Rule" id="MF_00386"/>
    </source>
</evidence>
<reference key="1">
    <citation type="journal article" date="2000" name="Nature">
        <title>DNA sequence of both chromosomes of the cholera pathogen Vibrio cholerae.</title>
        <authorList>
            <person name="Heidelberg J.F."/>
            <person name="Eisen J.A."/>
            <person name="Nelson W.C."/>
            <person name="Clayton R.A."/>
            <person name="Gwinn M.L."/>
            <person name="Dodson R.J."/>
            <person name="Haft D.H."/>
            <person name="Hickey E.K."/>
            <person name="Peterson J.D."/>
            <person name="Umayam L.A."/>
            <person name="Gill S.R."/>
            <person name="Nelson K.E."/>
            <person name="Read T.D."/>
            <person name="Tettelin H."/>
            <person name="Richardson D.L."/>
            <person name="Ermolaeva M.D."/>
            <person name="Vamathevan J.J."/>
            <person name="Bass S."/>
            <person name="Qin H."/>
            <person name="Dragoi I."/>
            <person name="Sellers P."/>
            <person name="McDonald L.A."/>
            <person name="Utterback T.R."/>
            <person name="Fleischmann R.D."/>
            <person name="Nierman W.C."/>
            <person name="White O."/>
            <person name="Salzberg S.L."/>
            <person name="Smith H.O."/>
            <person name="Colwell R.R."/>
            <person name="Mekalanos J.J."/>
            <person name="Venter J.C."/>
            <person name="Fraser C.M."/>
        </authorList>
    </citation>
    <scope>NUCLEOTIDE SEQUENCE [LARGE SCALE GENOMIC DNA]</scope>
    <source>
        <strain>ATCC 39315 / El Tor Inaba N16961</strain>
    </source>
</reference>